<sequence length="209" mass="23718">MEWKIDKDCVDYQMSLMFMQERVKQVINGSGDELVWMLQYEALYTGGTSADPQDLLNSDLFPVFNVGRGGKYTYHGPGQRVIYPILNLRSRNICDLHKYIYLLEEVVIVTLDNFGINGCRKEGHIGVWVGTGCQPPKKIAAIGVRVSKWVSYHGIAVNLYPDLSHYDAIIPCGIKNFGVTSAKEMGIEIRSFNAFDRYFKKSFVKIFGE</sequence>
<accession>Q2GEU6</accession>
<organism>
    <name type="scientific">Neorickettsia sennetsu (strain ATCC VR-367 / Miyayama)</name>
    <name type="common">Ehrlichia sennetsu</name>
    <dbReference type="NCBI Taxonomy" id="222891"/>
    <lineage>
        <taxon>Bacteria</taxon>
        <taxon>Pseudomonadati</taxon>
        <taxon>Pseudomonadota</taxon>
        <taxon>Alphaproteobacteria</taxon>
        <taxon>Rickettsiales</taxon>
        <taxon>Anaplasmataceae</taxon>
        <taxon>Neorickettsia</taxon>
    </lineage>
</organism>
<feature type="chain" id="PRO_0000242735" description="Octanoyltransferase">
    <location>
        <begin position="1"/>
        <end position="209"/>
    </location>
</feature>
<feature type="domain" description="BPL/LPL catalytic" evidence="2">
    <location>
        <begin position="29"/>
        <end position="209"/>
    </location>
</feature>
<feature type="active site" description="Acyl-thioester intermediate" evidence="1">
    <location>
        <position position="172"/>
    </location>
</feature>
<feature type="binding site" evidence="1">
    <location>
        <begin position="68"/>
        <end position="75"/>
    </location>
    <ligand>
        <name>substrate</name>
    </ligand>
</feature>
<feature type="binding site" evidence="1">
    <location>
        <begin position="141"/>
        <end position="143"/>
    </location>
    <ligand>
        <name>substrate</name>
    </ligand>
</feature>
<feature type="binding site" evidence="1">
    <location>
        <begin position="154"/>
        <end position="156"/>
    </location>
    <ligand>
        <name>substrate</name>
    </ligand>
</feature>
<feature type="site" description="Lowers pKa of active site Cys" evidence="1">
    <location>
        <position position="138"/>
    </location>
</feature>
<proteinExistence type="inferred from homology"/>
<name>LIPB_NEOSM</name>
<evidence type="ECO:0000255" key="1">
    <source>
        <dbReference type="HAMAP-Rule" id="MF_00013"/>
    </source>
</evidence>
<evidence type="ECO:0000255" key="2">
    <source>
        <dbReference type="PROSITE-ProRule" id="PRU01067"/>
    </source>
</evidence>
<gene>
    <name evidence="1" type="primary">lipB</name>
    <name type="ordered locus">NSE_0100</name>
</gene>
<dbReference type="EC" id="2.3.1.181" evidence="1"/>
<dbReference type="EMBL" id="CP000237">
    <property type="protein sequence ID" value="ABD45710.1"/>
    <property type="molecule type" value="Genomic_DNA"/>
</dbReference>
<dbReference type="SMR" id="Q2GEU6"/>
<dbReference type="STRING" id="222891.NSE_0100"/>
<dbReference type="KEGG" id="nse:NSE_0100"/>
<dbReference type="eggNOG" id="COG0321">
    <property type="taxonomic scope" value="Bacteria"/>
</dbReference>
<dbReference type="HOGENOM" id="CLU_035168_3_0_5"/>
<dbReference type="OrthoDB" id="9787061at2"/>
<dbReference type="UniPathway" id="UPA00538">
    <property type="reaction ID" value="UER00592"/>
</dbReference>
<dbReference type="Proteomes" id="UP000001942">
    <property type="component" value="Chromosome"/>
</dbReference>
<dbReference type="GO" id="GO:0005737">
    <property type="term" value="C:cytoplasm"/>
    <property type="evidence" value="ECO:0007669"/>
    <property type="project" value="UniProtKB-SubCell"/>
</dbReference>
<dbReference type="GO" id="GO:0033819">
    <property type="term" value="F:lipoyl(octanoyl) transferase activity"/>
    <property type="evidence" value="ECO:0007669"/>
    <property type="project" value="UniProtKB-EC"/>
</dbReference>
<dbReference type="GO" id="GO:0036211">
    <property type="term" value="P:protein modification process"/>
    <property type="evidence" value="ECO:0007669"/>
    <property type="project" value="InterPro"/>
</dbReference>
<dbReference type="CDD" id="cd16444">
    <property type="entry name" value="LipB"/>
    <property type="match status" value="1"/>
</dbReference>
<dbReference type="Gene3D" id="3.30.930.10">
    <property type="entry name" value="Bira Bifunctional Protein, Domain 2"/>
    <property type="match status" value="1"/>
</dbReference>
<dbReference type="HAMAP" id="MF_00013">
    <property type="entry name" value="LipB"/>
    <property type="match status" value="1"/>
</dbReference>
<dbReference type="InterPro" id="IPR045864">
    <property type="entry name" value="aa-tRNA-synth_II/BPL/LPL"/>
</dbReference>
<dbReference type="InterPro" id="IPR004143">
    <property type="entry name" value="BPL_LPL_catalytic"/>
</dbReference>
<dbReference type="InterPro" id="IPR000544">
    <property type="entry name" value="Octanoyltransferase"/>
</dbReference>
<dbReference type="InterPro" id="IPR020605">
    <property type="entry name" value="Octanoyltransferase_CS"/>
</dbReference>
<dbReference type="NCBIfam" id="TIGR00214">
    <property type="entry name" value="lipB"/>
    <property type="match status" value="1"/>
</dbReference>
<dbReference type="NCBIfam" id="NF010921">
    <property type="entry name" value="PRK14341.1"/>
    <property type="match status" value="1"/>
</dbReference>
<dbReference type="NCBIfam" id="NF010925">
    <property type="entry name" value="PRK14345.1"/>
    <property type="match status" value="1"/>
</dbReference>
<dbReference type="PANTHER" id="PTHR10993:SF7">
    <property type="entry name" value="LIPOYLTRANSFERASE 2, MITOCHONDRIAL-RELATED"/>
    <property type="match status" value="1"/>
</dbReference>
<dbReference type="PANTHER" id="PTHR10993">
    <property type="entry name" value="OCTANOYLTRANSFERASE"/>
    <property type="match status" value="1"/>
</dbReference>
<dbReference type="Pfam" id="PF21948">
    <property type="entry name" value="LplA-B_cat"/>
    <property type="match status" value="1"/>
</dbReference>
<dbReference type="PIRSF" id="PIRSF016262">
    <property type="entry name" value="LPLase"/>
    <property type="match status" value="1"/>
</dbReference>
<dbReference type="SUPFAM" id="SSF55681">
    <property type="entry name" value="Class II aaRS and biotin synthetases"/>
    <property type="match status" value="1"/>
</dbReference>
<dbReference type="PROSITE" id="PS51733">
    <property type="entry name" value="BPL_LPL_CATALYTIC"/>
    <property type="match status" value="1"/>
</dbReference>
<dbReference type="PROSITE" id="PS01313">
    <property type="entry name" value="LIPB"/>
    <property type="match status" value="1"/>
</dbReference>
<comment type="function">
    <text evidence="1">Catalyzes the transfer of endogenously produced octanoic acid from octanoyl-acyl-carrier-protein onto the lipoyl domains of lipoate-dependent enzymes. Lipoyl-ACP can also act as a substrate although octanoyl-ACP is likely to be the physiological substrate.</text>
</comment>
<comment type="catalytic activity">
    <reaction evidence="1">
        <text>octanoyl-[ACP] + L-lysyl-[protein] = N(6)-octanoyl-L-lysyl-[protein] + holo-[ACP] + H(+)</text>
        <dbReference type="Rhea" id="RHEA:17665"/>
        <dbReference type="Rhea" id="RHEA-COMP:9636"/>
        <dbReference type="Rhea" id="RHEA-COMP:9685"/>
        <dbReference type="Rhea" id="RHEA-COMP:9752"/>
        <dbReference type="Rhea" id="RHEA-COMP:9928"/>
        <dbReference type="ChEBI" id="CHEBI:15378"/>
        <dbReference type="ChEBI" id="CHEBI:29969"/>
        <dbReference type="ChEBI" id="CHEBI:64479"/>
        <dbReference type="ChEBI" id="CHEBI:78463"/>
        <dbReference type="ChEBI" id="CHEBI:78809"/>
        <dbReference type="EC" id="2.3.1.181"/>
    </reaction>
</comment>
<comment type="pathway">
    <text evidence="1">Protein modification; protein lipoylation via endogenous pathway; protein N(6)-(lipoyl)lysine from octanoyl-[acyl-carrier-protein]: step 1/2.</text>
</comment>
<comment type="subcellular location">
    <subcellularLocation>
        <location evidence="1">Cytoplasm</location>
    </subcellularLocation>
</comment>
<comment type="miscellaneous">
    <text evidence="1">In the reaction, the free carboxyl group of octanoic acid is attached via an amide linkage to the epsilon-amino group of a specific lysine residue of lipoyl domains of lipoate-dependent enzymes.</text>
</comment>
<comment type="similarity">
    <text evidence="1">Belongs to the LipB family.</text>
</comment>
<protein>
    <recommendedName>
        <fullName evidence="1">Octanoyltransferase</fullName>
        <ecNumber evidence="1">2.3.1.181</ecNumber>
    </recommendedName>
    <alternativeName>
        <fullName evidence="1">Lipoate-protein ligase B</fullName>
    </alternativeName>
    <alternativeName>
        <fullName evidence="1">Lipoyl/octanoyl transferase</fullName>
    </alternativeName>
    <alternativeName>
        <fullName evidence="1">Octanoyl-[acyl-carrier-protein]-protein N-octanoyltransferase</fullName>
    </alternativeName>
</protein>
<keyword id="KW-0012">Acyltransferase</keyword>
<keyword id="KW-0963">Cytoplasm</keyword>
<keyword id="KW-0808">Transferase</keyword>
<reference key="1">
    <citation type="journal article" date="2006" name="PLoS Genet.">
        <title>Comparative genomics of emerging human ehrlichiosis agents.</title>
        <authorList>
            <person name="Dunning Hotopp J.C."/>
            <person name="Lin M."/>
            <person name="Madupu R."/>
            <person name="Crabtree J."/>
            <person name="Angiuoli S.V."/>
            <person name="Eisen J.A."/>
            <person name="Seshadri R."/>
            <person name="Ren Q."/>
            <person name="Wu M."/>
            <person name="Utterback T.R."/>
            <person name="Smith S."/>
            <person name="Lewis M."/>
            <person name="Khouri H."/>
            <person name="Zhang C."/>
            <person name="Niu H."/>
            <person name="Lin Q."/>
            <person name="Ohashi N."/>
            <person name="Zhi N."/>
            <person name="Nelson W.C."/>
            <person name="Brinkac L.M."/>
            <person name="Dodson R.J."/>
            <person name="Rosovitz M.J."/>
            <person name="Sundaram J.P."/>
            <person name="Daugherty S.C."/>
            <person name="Davidsen T."/>
            <person name="Durkin A.S."/>
            <person name="Gwinn M.L."/>
            <person name="Haft D.H."/>
            <person name="Selengut J.D."/>
            <person name="Sullivan S.A."/>
            <person name="Zafar N."/>
            <person name="Zhou L."/>
            <person name="Benahmed F."/>
            <person name="Forberger H."/>
            <person name="Halpin R."/>
            <person name="Mulligan S."/>
            <person name="Robinson J."/>
            <person name="White O."/>
            <person name="Rikihisa Y."/>
            <person name="Tettelin H."/>
        </authorList>
    </citation>
    <scope>NUCLEOTIDE SEQUENCE [LARGE SCALE GENOMIC DNA]</scope>
    <source>
        <strain>ATCC VR-367 / Miyayama</strain>
    </source>
</reference>